<feature type="chain" id="PRO_0000183871" description="Cytochrome c oxidase subunit 3">
    <location>
        <begin position="1"/>
        <end position="265"/>
    </location>
</feature>
<feature type="transmembrane region" description="Helical" evidence="2">
    <location>
        <begin position="41"/>
        <end position="61"/>
    </location>
</feature>
<feature type="transmembrane region" description="Helical" evidence="2">
    <location>
        <begin position="85"/>
        <end position="105"/>
    </location>
</feature>
<feature type="transmembrane region" description="Helical" evidence="2">
    <location>
        <begin position="137"/>
        <end position="157"/>
    </location>
</feature>
<feature type="transmembrane region" description="Helical" evidence="2">
    <location>
        <begin position="162"/>
        <end position="182"/>
    </location>
</feature>
<feature type="transmembrane region" description="Helical" evidence="2">
    <location>
        <begin position="200"/>
        <end position="220"/>
    </location>
</feature>
<feature type="transmembrane region" description="Helical" evidence="2">
    <location>
        <begin position="245"/>
        <end position="265"/>
    </location>
</feature>
<accession>P15953</accession>
<reference key="1">
    <citation type="journal article" date="1990" name="Curr. Genet.">
        <title>Structure and transcription of the gene coding for subunit 3 of cytochrome oxidase in wheat mitochondria.</title>
        <authorList>
            <person name="Gualberto J.M."/>
            <person name="Domon C."/>
            <person name="Weil J.H."/>
            <person name="Grienenberger J.-M."/>
        </authorList>
    </citation>
    <scope>NUCLEOTIDE SEQUENCE [GENOMIC DNA]</scope>
    <source>
        <strain>cv. Capitole</strain>
    </source>
</reference>
<reference key="2">
    <citation type="journal article" date="1992" name="J. Mol. Evol.">
        <title>Genetic code and phylogenetic origin of oomycetous mitochondria.</title>
        <authorList>
            <person name="Karlovsky P."/>
            <person name="Fartmann B."/>
        </authorList>
    </citation>
    <scope>NUCLEOTIDE SEQUENCE</scope>
    <source>
        <strain>cv. Capitole</strain>
        <tissue>Etiolated plantlet</tissue>
    </source>
</reference>
<reference key="3">
    <citation type="journal article" date="1990" name="Nucleic Acids Res.">
        <title>Editing of the wheat coxIII transcript: evidence for twelve C to U and one U to C conversions and for sequence similarities around editing sites.</title>
        <authorList>
            <person name="Gualberto J.M."/>
            <person name="Weil J.H."/>
            <person name="Grienenberger J.M."/>
        </authorList>
    </citation>
    <scope>RNA EDITING</scope>
</reference>
<comment type="function">
    <text evidence="1">Component of the cytochrome c oxidase, the last enzyme in the mitochondrial electron transport chain which drives oxidative phosphorylation. The respiratory chain contains 3 multisubunit complexes succinate dehydrogenase (complex II, CII), ubiquinol-cytochrome c oxidoreductase (cytochrome b-c1 complex, complex III, CIII) and cytochrome c oxidase (complex IV, CIV), that cooperate to transfer electrons derived from NADH and succinate to molecular oxygen, creating an electrochemical gradient over the inner membrane that drives transmembrane transport and the ATP synthase. Cytochrome c oxidase is the component of the respiratory chain that catalyzes the reduction of oxygen to water. Electrons originating from reduced cytochrome c in the intermembrane space (IMS) are transferred via the dinuclear copper A center (CU(A)) of subunit 2 and heme A of subunit 1 to the active site in subunit 1, a binuclear center (BNC) formed by heme A3 and copper B (CU(B)). The BNC reduces molecular oxygen to 2 water molecules using 4 electrons from cytochrome c in the IMS and 4 protons from the mitochondrial matrix.</text>
</comment>
<comment type="catalytic activity">
    <reaction evidence="1">
        <text>4 Fe(II)-[cytochrome c] + O2 + 8 H(+)(in) = 4 Fe(III)-[cytochrome c] + 2 H2O + 4 H(+)(out)</text>
        <dbReference type="Rhea" id="RHEA:11436"/>
        <dbReference type="Rhea" id="RHEA-COMP:10350"/>
        <dbReference type="Rhea" id="RHEA-COMP:14399"/>
        <dbReference type="ChEBI" id="CHEBI:15377"/>
        <dbReference type="ChEBI" id="CHEBI:15378"/>
        <dbReference type="ChEBI" id="CHEBI:15379"/>
        <dbReference type="ChEBI" id="CHEBI:29033"/>
        <dbReference type="ChEBI" id="CHEBI:29034"/>
        <dbReference type="EC" id="7.1.1.9"/>
    </reaction>
    <physiologicalReaction direction="left-to-right" evidence="1">
        <dbReference type="Rhea" id="RHEA:11437"/>
    </physiologicalReaction>
</comment>
<comment type="subunit">
    <text evidence="1">Component of the cytochrome c oxidase (complex IV, CIV), a multisubunit enzyme composed of a catalytic core of 3 subunits and several supernumerary subunits. The complex exists as a monomer or a dimer and forms supercomplexes (SCs) in the inner mitochondrial membrane with ubiquinol-cytochrome c oxidoreductase (cytochrome b-c1 complex, complex III, CIII).</text>
</comment>
<comment type="subcellular location">
    <subcellularLocation>
        <location evidence="1">Mitochondrion inner membrane</location>
        <topology evidence="1">Multi-pass membrane protein</topology>
    </subcellularLocation>
</comment>
<comment type="RNA editing">
    <location>
        <position position="82" evidence="3"/>
    </location>
    <location>
        <position position="86" evidence="3"/>
    </location>
    <location>
        <position position="97" evidence="3"/>
    </location>
    <location>
        <position position="104" evidence="3"/>
    </location>
    <location>
        <position position="105" evidence="3"/>
    </location>
    <location>
        <position position="138" evidence="3"/>
    </location>
    <location>
        <position position="141" evidence="3"/>
    </location>
    <location>
        <position position="171" evidence="3"/>
    </location>
    <location>
        <position position="176" evidence="3"/>
    </location>
    <location>
        <position position="189" evidence="3"/>
    </location>
    <location>
        <position position="252" evidence="3"/>
    </location>
    <location>
        <position position="255" evidence="3"/>
    </location>
</comment>
<comment type="similarity">
    <text evidence="4">Belongs to the cytochrome c oxidase subunit 3 family.</text>
</comment>
<gene>
    <name type="primary">COX3</name>
</gene>
<organism>
    <name type="scientific">Triticum aestivum</name>
    <name type="common">Wheat</name>
    <dbReference type="NCBI Taxonomy" id="4565"/>
    <lineage>
        <taxon>Eukaryota</taxon>
        <taxon>Viridiplantae</taxon>
        <taxon>Streptophyta</taxon>
        <taxon>Embryophyta</taxon>
        <taxon>Tracheophyta</taxon>
        <taxon>Spermatophyta</taxon>
        <taxon>Magnoliopsida</taxon>
        <taxon>Liliopsida</taxon>
        <taxon>Poales</taxon>
        <taxon>Poaceae</taxon>
        <taxon>BOP clade</taxon>
        <taxon>Pooideae</taxon>
        <taxon>Triticodae</taxon>
        <taxon>Triticeae</taxon>
        <taxon>Triticinae</taxon>
        <taxon>Triticum</taxon>
    </lineage>
</organism>
<geneLocation type="mitochondrion"/>
<evidence type="ECO:0000250" key="1">
    <source>
        <dbReference type="UniProtKB" id="P00420"/>
    </source>
</evidence>
<evidence type="ECO:0000255" key="2"/>
<evidence type="ECO:0000269" key="3">
    <source>
    </source>
</evidence>
<evidence type="ECO:0000305" key="4"/>
<name>COX3_WHEAT</name>
<keyword id="KW-0472">Membrane</keyword>
<keyword id="KW-0496">Mitochondrion</keyword>
<keyword id="KW-0999">Mitochondrion inner membrane</keyword>
<keyword id="KW-1185">Reference proteome</keyword>
<keyword id="KW-0691">RNA editing</keyword>
<keyword id="KW-1278">Translocase</keyword>
<keyword id="KW-0812">Transmembrane</keyword>
<keyword id="KW-1133">Transmembrane helix</keyword>
<protein>
    <recommendedName>
        <fullName>Cytochrome c oxidase subunit 3</fullName>
        <ecNumber>7.1.1.9</ecNumber>
    </recommendedName>
    <alternativeName>
        <fullName>Cytochrome c oxidase polypeptide III</fullName>
    </alternativeName>
</protein>
<sequence length="265" mass="29796">MIESQRHSYHLVDPSPWPISGSLGALATTVGGVMYMHSFQGGATLLSLGLIFILYTMFVWWRDVLRESTLEGHHTKAVQLGLRYGFILFIVSEVMFFFAFFWAFFHSSLAPTVEIGGIWPPKGIGVLDPWEIPLLNTLILLSSGAAVTWAHHAILAGKEKRAVYALVATVLLALVFTGFQGMEYYQAPFTISDSIYGSTFFLATGFHGFHVIIGTLFLIVCGIRQYLGQMTKKHHVGFEAAAWYWHFVDVVWLFLFVSIYWWGGI</sequence>
<proteinExistence type="evidence at transcript level"/>
<dbReference type="EC" id="7.1.1.9"/>
<dbReference type="EMBL" id="X52539">
    <property type="protein sequence ID" value="CAA36775.1"/>
    <property type="molecule type" value="mRNA"/>
</dbReference>
<dbReference type="EMBL" id="X15944">
    <property type="protein sequence ID" value="CAA34071.1"/>
    <property type="status" value="ALT_SEQ"/>
    <property type="molecule type" value="Genomic_DNA"/>
</dbReference>
<dbReference type="PIR" id="S10331">
    <property type="entry name" value="OTWT3M"/>
</dbReference>
<dbReference type="RefSeq" id="YP_398397.1">
    <property type="nucleotide sequence ID" value="NC_007579.1"/>
</dbReference>
<dbReference type="SMR" id="P15953"/>
<dbReference type="PaxDb" id="4565-EPlTAEP00000010091"/>
<dbReference type="eggNOG" id="KOG4664">
    <property type="taxonomic scope" value="Eukaryota"/>
</dbReference>
<dbReference type="Proteomes" id="UP000019116">
    <property type="component" value="Unplaced"/>
</dbReference>
<dbReference type="ExpressionAtlas" id="P15953">
    <property type="expression patterns" value="baseline and differential"/>
</dbReference>
<dbReference type="GO" id="GO:0005743">
    <property type="term" value="C:mitochondrial inner membrane"/>
    <property type="evidence" value="ECO:0007669"/>
    <property type="project" value="UniProtKB-SubCell"/>
</dbReference>
<dbReference type="GO" id="GO:0004129">
    <property type="term" value="F:cytochrome-c oxidase activity"/>
    <property type="evidence" value="ECO:0007669"/>
    <property type="project" value="UniProtKB-EC"/>
</dbReference>
<dbReference type="GO" id="GO:0019646">
    <property type="term" value="P:aerobic electron transport chain"/>
    <property type="evidence" value="ECO:0007669"/>
    <property type="project" value="InterPro"/>
</dbReference>
<dbReference type="CDD" id="cd01665">
    <property type="entry name" value="Cyt_c_Oxidase_III"/>
    <property type="match status" value="1"/>
</dbReference>
<dbReference type="FunFam" id="1.10.287.70:FF:000075">
    <property type="entry name" value="Cytochrome c oxidase subunit 3"/>
    <property type="match status" value="1"/>
</dbReference>
<dbReference type="FunFam" id="1.20.120.80:FF:000002">
    <property type="entry name" value="Cytochrome c oxidase subunit 3"/>
    <property type="match status" value="1"/>
</dbReference>
<dbReference type="Gene3D" id="1.10.287.70">
    <property type="match status" value="1"/>
</dbReference>
<dbReference type="Gene3D" id="1.20.120.80">
    <property type="entry name" value="Cytochrome c oxidase, subunit III, four-helix bundle"/>
    <property type="match status" value="1"/>
</dbReference>
<dbReference type="InterPro" id="IPR024791">
    <property type="entry name" value="Cyt_c/ubiquinol_Oxase_su3"/>
</dbReference>
<dbReference type="InterPro" id="IPR033945">
    <property type="entry name" value="Cyt_c_oxase_su3_dom"/>
</dbReference>
<dbReference type="InterPro" id="IPR000298">
    <property type="entry name" value="Cyt_c_oxidase-like_su3"/>
</dbReference>
<dbReference type="InterPro" id="IPR035973">
    <property type="entry name" value="Cyt_c_oxidase_su3-like_sf"/>
</dbReference>
<dbReference type="InterPro" id="IPR013833">
    <property type="entry name" value="Cyt_c_oxidase_su3_a-hlx"/>
</dbReference>
<dbReference type="PANTHER" id="PTHR11403:SF7">
    <property type="entry name" value="CYTOCHROME C OXIDASE SUBUNIT 3"/>
    <property type="match status" value="1"/>
</dbReference>
<dbReference type="PANTHER" id="PTHR11403">
    <property type="entry name" value="CYTOCHROME C OXIDASE SUBUNIT III"/>
    <property type="match status" value="1"/>
</dbReference>
<dbReference type="Pfam" id="PF00510">
    <property type="entry name" value="COX3"/>
    <property type="match status" value="1"/>
</dbReference>
<dbReference type="SUPFAM" id="SSF81452">
    <property type="entry name" value="Cytochrome c oxidase subunit III-like"/>
    <property type="match status" value="1"/>
</dbReference>
<dbReference type="PROSITE" id="PS50253">
    <property type="entry name" value="COX3"/>
    <property type="match status" value="1"/>
</dbReference>